<name>TOLB_VESOH</name>
<sequence length="424" mass="48601">MKQFIVFILSLYTTLSWAVLEVTIFKQEENTFPIVISDFFVVGDASQGKVIADIMRNNFNRSGEFSVVNANYIIRSKPSFDKWKAKKIEAIVLGKLEKISKKIFNVEIELLDVYSKKTLYKDIFTVHNSGIRRIAHYLSDQIYHALLGKRGFFNTRLAYITVINKDKGEREYRLEISDSDAQNPQTILKSREPLLSPVWSPKQDKIAYVSFKNSRSEVFIQYPFIRRKIQKLPYFDGIASSPSWHPNGEILLLTLSKNGNKDIYSYQLSSKKLTRLTIDMGIDTEASYSPDGNKIIFTSNRSGQVQVYIKDLKTNKINRATFKGRYNAQAVFSPDGKSLIMVHKIDQDYRIALLDIATKDLKVMTNNQLDESPFFSPNGDMIIFATNQGGFGVLSVVSIWGRQIFELTSKVGEVREPNWSHYLK</sequence>
<reference key="1">
    <citation type="journal article" date="2007" name="Curr. Biol.">
        <title>Reduced genome of the thioautotrophic intracellular symbiont in a deep-sea clam, Calyptogena okutanii.</title>
        <authorList>
            <person name="Kuwahara H."/>
            <person name="Yoshida T."/>
            <person name="Takaki Y."/>
            <person name="Shimamura S."/>
            <person name="Nishi S."/>
            <person name="Harada M."/>
            <person name="Matsuyama K."/>
            <person name="Takishita K."/>
            <person name="Kawato M."/>
            <person name="Uematsu K."/>
            <person name="Fujiwara Y."/>
            <person name="Sato T."/>
            <person name="Kato C."/>
            <person name="Kitagawa M."/>
            <person name="Kato I."/>
            <person name="Maruyama T."/>
        </authorList>
    </citation>
    <scope>NUCLEOTIDE SEQUENCE [LARGE SCALE GENOMIC DNA]</scope>
    <source>
        <strain>HA</strain>
    </source>
</reference>
<keyword id="KW-0131">Cell cycle</keyword>
<keyword id="KW-0132">Cell division</keyword>
<keyword id="KW-0574">Periplasm</keyword>
<keyword id="KW-1185">Reference proteome</keyword>
<keyword id="KW-0732">Signal</keyword>
<proteinExistence type="inferred from homology"/>
<feature type="signal peptide" evidence="1">
    <location>
        <begin position="1"/>
        <end position="20"/>
    </location>
</feature>
<feature type="chain" id="PRO_1000026712" description="Tol-Pal system protein TolB" evidence="1">
    <location>
        <begin position="21"/>
        <end position="424"/>
    </location>
</feature>
<organism>
    <name type="scientific">Vesicomyosocius okutanii subsp. Calyptogena okutanii (strain HA)</name>
    <dbReference type="NCBI Taxonomy" id="412965"/>
    <lineage>
        <taxon>Bacteria</taxon>
        <taxon>Pseudomonadati</taxon>
        <taxon>Pseudomonadota</taxon>
        <taxon>Gammaproteobacteria</taxon>
        <taxon>Candidatus Pseudothioglobaceae</taxon>
        <taxon>Candidatus Vesicomyosocius</taxon>
    </lineage>
</organism>
<dbReference type="EMBL" id="AP009247">
    <property type="protein sequence ID" value="BAF61592.1"/>
    <property type="molecule type" value="Genomic_DNA"/>
</dbReference>
<dbReference type="RefSeq" id="WP_011929862.1">
    <property type="nucleotide sequence ID" value="NC_009465.1"/>
</dbReference>
<dbReference type="SMR" id="A5CWT2"/>
<dbReference type="STRING" id="412965.COSY_0473"/>
<dbReference type="KEGG" id="vok:COSY_0473"/>
<dbReference type="eggNOG" id="COG0823">
    <property type="taxonomic scope" value="Bacteria"/>
</dbReference>
<dbReference type="HOGENOM" id="CLU_047123_0_0_6"/>
<dbReference type="OrthoDB" id="9802240at2"/>
<dbReference type="Proteomes" id="UP000000247">
    <property type="component" value="Chromosome"/>
</dbReference>
<dbReference type="GO" id="GO:0042597">
    <property type="term" value="C:periplasmic space"/>
    <property type="evidence" value="ECO:0007669"/>
    <property type="project" value="UniProtKB-SubCell"/>
</dbReference>
<dbReference type="GO" id="GO:0051301">
    <property type="term" value="P:cell division"/>
    <property type="evidence" value="ECO:0007669"/>
    <property type="project" value="UniProtKB-UniRule"/>
</dbReference>
<dbReference type="GO" id="GO:0017038">
    <property type="term" value="P:protein import"/>
    <property type="evidence" value="ECO:0007669"/>
    <property type="project" value="InterPro"/>
</dbReference>
<dbReference type="Gene3D" id="2.120.10.30">
    <property type="entry name" value="TolB, C-terminal domain"/>
    <property type="match status" value="1"/>
</dbReference>
<dbReference type="Gene3D" id="3.40.50.10070">
    <property type="entry name" value="TolB, N-terminal domain"/>
    <property type="match status" value="1"/>
</dbReference>
<dbReference type="HAMAP" id="MF_00671">
    <property type="entry name" value="TolB"/>
    <property type="match status" value="1"/>
</dbReference>
<dbReference type="InterPro" id="IPR011042">
    <property type="entry name" value="6-blade_b-propeller_TolB-like"/>
</dbReference>
<dbReference type="InterPro" id="IPR011659">
    <property type="entry name" value="PD40"/>
</dbReference>
<dbReference type="InterPro" id="IPR014167">
    <property type="entry name" value="Tol-Pal_TolB"/>
</dbReference>
<dbReference type="InterPro" id="IPR007195">
    <property type="entry name" value="TolB_N"/>
</dbReference>
<dbReference type="NCBIfam" id="TIGR02800">
    <property type="entry name" value="propeller_TolB"/>
    <property type="match status" value="1"/>
</dbReference>
<dbReference type="PANTHER" id="PTHR36842:SF1">
    <property type="entry name" value="PROTEIN TOLB"/>
    <property type="match status" value="1"/>
</dbReference>
<dbReference type="PANTHER" id="PTHR36842">
    <property type="entry name" value="PROTEIN TOLB HOMOLOG"/>
    <property type="match status" value="1"/>
</dbReference>
<dbReference type="Pfam" id="PF07676">
    <property type="entry name" value="PD40"/>
    <property type="match status" value="3"/>
</dbReference>
<dbReference type="Pfam" id="PF04052">
    <property type="entry name" value="TolB_N"/>
    <property type="match status" value="1"/>
</dbReference>
<dbReference type="SUPFAM" id="SSF52964">
    <property type="entry name" value="TolB, N-terminal domain"/>
    <property type="match status" value="1"/>
</dbReference>
<dbReference type="SUPFAM" id="SSF69304">
    <property type="entry name" value="Tricorn protease N-terminal domain"/>
    <property type="match status" value="1"/>
</dbReference>
<accession>A5CWT2</accession>
<protein>
    <recommendedName>
        <fullName evidence="1">Tol-Pal system protein TolB</fullName>
    </recommendedName>
</protein>
<evidence type="ECO:0000255" key="1">
    <source>
        <dbReference type="HAMAP-Rule" id="MF_00671"/>
    </source>
</evidence>
<gene>
    <name evidence="1" type="primary">tolB</name>
    <name type="ordered locus">COSY_0473</name>
</gene>
<comment type="function">
    <text evidence="1">Part of the Tol-Pal system, which plays a role in outer membrane invagination during cell division and is important for maintaining outer membrane integrity.</text>
</comment>
<comment type="subunit">
    <text evidence="1">The Tol-Pal system is composed of five core proteins: the inner membrane proteins TolA, TolQ and TolR, the periplasmic protein TolB and the outer membrane protein Pal. They form a network linking the inner and outer membranes and the peptidoglycan layer.</text>
</comment>
<comment type="subcellular location">
    <subcellularLocation>
        <location evidence="1">Periplasm</location>
    </subcellularLocation>
</comment>
<comment type="similarity">
    <text evidence="1">Belongs to the TolB family.</text>
</comment>